<reference key="1">
    <citation type="journal article" date="1997" name="Cell">
        <title>The MAD-related protein Smad7 associates with the TGFbeta receptor and functions as an antagonist of TGFbeta signaling.</title>
        <authorList>
            <person name="Hayashi H."/>
            <person name="Abdollah S."/>
            <person name="Qiu Y."/>
            <person name="Cai J."/>
            <person name="Xu Y.-Y."/>
            <person name="Grinnell B.W."/>
            <person name="Richardson M.A."/>
            <person name="Topper J.N."/>
            <person name="Gimbrone M.A. Jr."/>
            <person name="Wrana J.L."/>
            <person name="Falb D."/>
        </authorList>
    </citation>
    <scope>NUCLEOTIDE SEQUENCE [MRNA] (ISOFORM 1)</scope>
    <scope>MUTAGENESIS OF 409-ARG--ARG-426</scope>
    <source>
        <tissue>Umbilical vein endothelial cell</tissue>
    </source>
</reference>
<reference key="2">
    <citation type="journal article" date="1997" name="Proc. Natl. Acad. Sci. U.S.A.">
        <title>Vascular MADs: two novel MAD-related genes selectively inducible by flow in human vascular endothelium.</title>
        <authorList>
            <person name="Topper J.N."/>
            <person name="Cai J."/>
            <person name="Qui Y."/>
            <person name="Anderson K.R."/>
            <person name="Xu Y.-Y."/>
            <person name="Deeds J.D."/>
            <person name="Feeley R."/>
            <person name="Gimeno C.J."/>
            <person name="Woolf E.A."/>
            <person name="Tayber O."/>
            <person name="Mays G.G."/>
            <person name="Sampson B.A."/>
            <person name="Schoen F.J."/>
            <person name="Gimbrone M.A. Jr."/>
            <person name="Falb D."/>
        </authorList>
    </citation>
    <scope>NUCLEOTIDE SEQUENCE [MRNA] (ISOFORM 1)</scope>
    <source>
        <tissue>Umbilical vein endothelial cell</tissue>
    </source>
</reference>
<reference key="3">
    <citation type="journal article" date="1997" name="Nature">
        <title>Identification of Smad7, a TGFbeta-inducible antagonist of TGF-beta signalling.</title>
        <authorList>
            <person name="Nakao A."/>
            <person name="Afrakhte M."/>
            <person name="Moren A."/>
            <person name="Nakayama T."/>
            <person name="Christian J.L."/>
            <person name="Heuchel R."/>
            <person name="Itoh S."/>
            <person name="Kawabata M."/>
            <person name="Heldin N.-E."/>
            <person name="Heldin C.-H."/>
            <person name="ten Dijke P."/>
        </authorList>
    </citation>
    <scope>NUCLEOTIDE SEQUENCE [MRNA] (ISOFORM 1)</scope>
    <source>
        <tissue>Brain</tissue>
    </source>
</reference>
<reference key="4">
    <citation type="submission" date="1997-09" db="EMBL/GenBank/DDBJ databases">
        <authorList>
            <person name="Hagiwara K."/>
            <person name="Yang K."/>
            <person name="McMenamin M.G."/>
            <person name="Freeman A.H."/>
            <person name="Bennett W.P."/>
            <person name="Nagashima M."/>
            <person name="Minter A.R."/>
            <person name="Miyazono K."/>
            <person name="Takenoshita S."/>
            <person name="Harris C.C."/>
        </authorList>
    </citation>
    <scope>NUCLEOTIDE SEQUENCE [GENOMIC DNA]</scope>
</reference>
<reference key="5">
    <citation type="journal article" date="2004" name="Nat. Genet.">
        <title>Complete sequencing and characterization of 21,243 full-length human cDNAs.</title>
        <authorList>
            <person name="Ota T."/>
            <person name="Suzuki Y."/>
            <person name="Nishikawa T."/>
            <person name="Otsuki T."/>
            <person name="Sugiyama T."/>
            <person name="Irie R."/>
            <person name="Wakamatsu A."/>
            <person name="Hayashi K."/>
            <person name="Sato H."/>
            <person name="Nagai K."/>
            <person name="Kimura K."/>
            <person name="Makita H."/>
            <person name="Sekine M."/>
            <person name="Obayashi M."/>
            <person name="Nishi T."/>
            <person name="Shibahara T."/>
            <person name="Tanaka T."/>
            <person name="Ishii S."/>
            <person name="Yamamoto J."/>
            <person name="Saito K."/>
            <person name="Kawai Y."/>
            <person name="Isono Y."/>
            <person name="Nakamura Y."/>
            <person name="Nagahari K."/>
            <person name="Murakami K."/>
            <person name="Yasuda T."/>
            <person name="Iwayanagi T."/>
            <person name="Wagatsuma M."/>
            <person name="Shiratori A."/>
            <person name="Sudo H."/>
            <person name="Hosoiri T."/>
            <person name="Kaku Y."/>
            <person name="Kodaira H."/>
            <person name="Kondo H."/>
            <person name="Sugawara M."/>
            <person name="Takahashi M."/>
            <person name="Kanda K."/>
            <person name="Yokoi T."/>
            <person name="Furuya T."/>
            <person name="Kikkawa E."/>
            <person name="Omura Y."/>
            <person name="Abe K."/>
            <person name="Kamihara K."/>
            <person name="Katsuta N."/>
            <person name="Sato K."/>
            <person name="Tanikawa M."/>
            <person name="Yamazaki M."/>
            <person name="Ninomiya K."/>
            <person name="Ishibashi T."/>
            <person name="Yamashita H."/>
            <person name="Murakawa K."/>
            <person name="Fujimori K."/>
            <person name="Tanai H."/>
            <person name="Kimata M."/>
            <person name="Watanabe M."/>
            <person name="Hiraoka S."/>
            <person name="Chiba Y."/>
            <person name="Ishida S."/>
            <person name="Ono Y."/>
            <person name="Takiguchi S."/>
            <person name="Watanabe S."/>
            <person name="Yosida M."/>
            <person name="Hotuta T."/>
            <person name="Kusano J."/>
            <person name="Kanehori K."/>
            <person name="Takahashi-Fujii A."/>
            <person name="Hara H."/>
            <person name="Tanase T.-O."/>
            <person name="Nomura Y."/>
            <person name="Togiya S."/>
            <person name="Komai F."/>
            <person name="Hara R."/>
            <person name="Takeuchi K."/>
            <person name="Arita M."/>
            <person name="Imose N."/>
            <person name="Musashino K."/>
            <person name="Yuuki H."/>
            <person name="Oshima A."/>
            <person name="Sasaki N."/>
            <person name="Aotsuka S."/>
            <person name="Yoshikawa Y."/>
            <person name="Matsunawa H."/>
            <person name="Ichihara T."/>
            <person name="Shiohata N."/>
            <person name="Sano S."/>
            <person name="Moriya S."/>
            <person name="Momiyama H."/>
            <person name="Satoh N."/>
            <person name="Takami S."/>
            <person name="Terashima Y."/>
            <person name="Suzuki O."/>
            <person name="Nakagawa S."/>
            <person name="Senoh A."/>
            <person name="Mizoguchi H."/>
            <person name="Goto Y."/>
            <person name="Shimizu F."/>
            <person name="Wakebe H."/>
            <person name="Hishigaki H."/>
            <person name="Watanabe T."/>
            <person name="Sugiyama A."/>
            <person name="Takemoto M."/>
            <person name="Kawakami B."/>
            <person name="Yamazaki M."/>
            <person name="Watanabe K."/>
            <person name="Kumagai A."/>
            <person name="Itakura S."/>
            <person name="Fukuzumi Y."/>
            <person name="Fujimori Y."/>
            <person name="Komiyama M."/>
            <person name="Tashiro H."/>
            <person name="Tanigami A."/>
            <person name="Fujiwara T."/>
            <person name="Ono T."/>
            <person name="Yamada K."/>
            <person name="Fujii Y."/>
            <person name="Ozaki K."/>
            <person name="Hirao M."/>
            <person name="Ohmori Y."/>
            <person name="Kawabata A."/>
            <person name="Hikiji T."/>
            <person name="Kobatake N."/>
            <person name="Inagaki H."/>
            <person name="Ikema Y."/>
            <person name="Okamoto S."/>
            <person name="Okitani R."/>
            <person name="Kawakami T."/>
            <person name="Noguchi S."/>
            <person name="Itoh T."/>
            <person name="Shigeta K."/>
            <person name="Senba T."/>
            <person name="Matsumura K."/>
            <person name="Nakajima Y."/>
            <person name="Mizuno T."/>
            <person name="Morinaga M."/>
            <person name="Sasaki M."/>
            <person name="Togashi T."/>
            <person name="Oyama M."/>
            <person name="Hata H."/>
            <person name="Watanabe M."/>
            <person name="Komatsu T."/>
            <person name="Mizushima-Sugano J."/>
            <person name="Satoh T."/>
            <person name="Shirai Y."/>
            <person name="Takahashi Y."/>
            <person name="Nakagawa K."/>
            <person name="Okumura K."/>
            <person name="Nagase T."/>
            <person name="Nomura N."/>
            <person name="Kikuchi H."/>
            <person name="Masuho Y."/>
            <person name="Yamashita R."/>
            <person name="Nakai K."/>
            <person name="Yada T."/>
            <person name="Nakamura Y."/>
            <person name="Ohara O."/>
            <person name="Isogai T."/>
            <person name="Sugano S."/>
        </authorList>
    </citation>
    <scope>NUCLEOTIDE SEQUENCE [LARGE SCALE MRNA] (ISOFORM 2)</scope>
    <scope>NUCLEOTIDE SEQUENCE [LARGE SCALE MRNA] OF 98-271 (ISOFORM 3)</scope>
    <source>
        <tissue>Pulmonary artery</tissue>
    </source>
</reference>
<reference key="6">
    <citation type="journal article" date="2005" name="Nature">
        <title>DNA sequence and analysis of human chromosome 18.</title>
        <authorList>
            <person name="Nusbaum C."/>
            <person name="Zody M.C."/>
            <person name="Borowsky M.L."/>
            <person name="Kamal M."/>
            <person name="Kodira C.D."/>
            <person name="Taylor T.D."/>
            <person name="Whittaker C.A."/>
            <person name="Chang J.L."/>
            <person name="Cuomo C.A."/>
            <person name="Dewar K."/>
            <person name="FitzGerald M.G."/>
            <person name="Yang X."/>
            <person name="Abouelleil A."/>
            <person name="Allen N.R."/>
            <person name="Anderson S."/>
            <person name="Bloom T."/>
            <person name="Bugalter B."/>
            <person name="Butler J."/>
            <person name="Cook A."/>
            <person name="DeCaprio D."/>
            <person name="Engels R."/>
            <person name="Garber M."/>
            <person name="Gnirke A."/>
            <person name="Hafez N."/>
            <person name="Hall J.L."/>
            <person name="Norman C.H."/>
            <person name="Itoh T."/>
            <person name="Jaffe D.B."/>
            <person name="Kuroki Y."/>
            <person name="Lehoczky J."/>
            <person name="Lui A."/>
            <person name="Macdonald P."/>
            <person name="Mauceli E."/>
            <person name="Mikkelsen T.S."/>
            <person name="Naylor J.W."/>
            <person name="Nicol R."/>
            <person name="Nguyen C."/>
            <person name="Noguchi H."/>
            <person name="O'Leary S.B."/>
            <person name="Piqani B."/>
            <person name="Smith C.L."/>
            <person name="Talamas J.A."/>
            <person name="Topham K."/>
            <person name="Totoki Y."/>
            <person name="Toyoda A."/>
            <person name="Wain H.M."/>
            <person name="Young S.K."/>
            <person name="Zeng Q."/>
            <person name="Zimmer A.R."/>
            <person name="Fujiyama A."/>
            <person name="Hattori M."/>
            <person name="Birren B.W."/>
            <person name="Sakaki Y."/>
            <person name="Lander E.S."/>
        </authorList>
    </citation>
    <scope>NUCLEOTIDE SEQUENCE [LARGE SCALE GENOMIC DNA]</scope>
</reference>
<reference key="7">
    <citation type="journal article" date="2004" name="Genome Res.">
        <title>The status, quality, and expansion of the NIH full-length cDNA project: the Mammalian Gene Collection (MGC).</title>
        <authorList>
            <consortium name="The MGC Project Team"/>
        </authorList>
    </citation>
    <scope>NUCLEOTIDE SEQUENCE [LARGE SCALE MRNA]</scope>
    <source>
        <tissue>Lung</tissue>
    </source>
</reference>
<reference key="8">
    <citation type="journal article" date="1998" name="Annu. Rev. Biochem.">
        <title>TGF-beta signal transduction.</title>
        <authorList>
            <person name="Massague J."/>
        </authorList>
    </citation>
    <scope>REVIEW</scope>
</reference>
<reference key="9">
    <citation type="journal article" date="1999" name="Cytokine Growth Factor Rev.">
        <title>Remarkable versatility of Smad proteins in the nucleus of transforming growth factor-beta activated cells.</title>
        <authorList>
            <person name="Verschueren K."/>
            <person name="Huylebroeck D."/>
        </authorList>
    </citation>
    <scope>REVIEW</scope>
</reference>
<reference key="10">
    <citation type="journal article" date="1999" name="Mol. Endocrinol.">
        <title>Roles of pathway-specific and inhibitory Smads in activin receptor signaling.</title>
        <authorList>
            <person name="Lebrun J.J."/>
            <person name="Takabe K."/>
            <person name="Chen Y."/>
            <person name="Vale W."/>
        </authorList>
    </citation>
    <scope>INTERACTION WITH ACVR1B</scope>
    <scope>FUNCTION</scope>
</reference>
<reference key="11">
    <citation type="journal article" date="2000" name="Cytokine Growth Factor Rev.">
        <title>The Smad pathway.</title>
        <authorList>
            <person name="Wrana J.L."/>
            <person name="Attisano L."/>
        </authorList>
    </citation>
    <scope>REVIEW</scope>
</reference>
<reference key="12">
    <citation type="journal article" date="2000" name="Cytokine Growth Factor Rev.">
        <title>TGF-beta signaling by Smad proteins.</title>
        <authorList>
            <person name="Miyazono K."/>
        </authorList>
    </citation>
    <scope>REVIEW</scope>
</reference>
<reference key="13">
    <citation type="journal article" date="2000" name="Mol. Cell">
        <title>Smad7 binds to Smurf2 to form an E3 ubiquitin ligase that targets the TGF-beta receptor for degradation.</title>
        <authorList>
            <person name="Kavsak P."/>
            <person name="Rasmussen R.K."/>
            <person name="Causing C.G."/>
            <person name="Bonni S."/>
            <person name="Zhu H."/>
            <person name="Thomsen G.H."/>
            <person name="Wrana J.L."/>
        </authorList>
    </citation>
    <scope>FUNCTION</scope>
    <scope>MUTAGENESIS OF TYR-211 AND 207-PRO--TYR-211</scope>
    <scope>INTERACTION WITH SMURF2 AND TGFBR1</scope>
</reference>
<reference key="14">
    <citation type="journal article" date="2001" name="EMBO J.">
        <title>Promoting bone morphogenetic protein signaling through negative regulation of inhibitory Smads.</title>
        <authorList>
            <person name="Itoh F."/>
            <person name="Asao H."/>
            <person name="Sugamura K."/>
            <person name="Heldin C.-H."/>
            <person name="ten Dijke P."/>
            <person name="Itoh S."/>
        </authorList>
    </citation>
    <scope>INTERACTION WITH STAMBP</scope>
</reference>
<reference key="15">
    <citation type="journal article" date="2001" name="J. Biol. Chem.">
        <title>Smurf1 interacts with transforming growth factor-beta type I receptor through Smad7 and induces receptor degradation.</title>
        <authorList>
            <person name="Ebisawa T."/>
            <person name="Fukuchi M."/>
            <person name="Murakami G."/>
            <person name="Chiba T."/>
            <person name="Tanaka K."/>
            <person name="Imamura T."/>
            <person name="Miyazono K."/>
        </authorList>
    </citation>
    <scope>INTERACTION WITH SMURF1 AND TGFBR1</scope>
    <scope>UBIQUITINATION</scope>
</reference>
<reference key="16">
    <citation type="journal article" date="2002" name="FEBS Lett.">
        <title>Phosphorylation regulation of the interaction between Smad7 and activin type I receptor.</title>
        <authorList>
            <person name="Liu X."/>
            <person name="Nagarajan R.P."/>
            <person name="Vale W."/>
            <person name="Chen Y."/>
        </authorList>
    </citation>
    <scope>INTERACTION WITH ACVR1B</scope>
    <scope>FUNCTION</scope>
</reference>
<reference key="17">
    <citation type="journal article" date="2002" name="Mol. Cell">
        <title>Control of Smad7 stability by competition between acetylation and ubiquitination.</title>
        <authorList>
            <person name="Gronroos E."/>
            <person name="Hellman U."/>
            <person name="Heldin C.H."/>
            <person name="Ericsson J."/>
        </authorList>
    </citation>
    <scope>INTERACTION WITH EP300</scope>
    <scope>ACETYLATION AT LYS-64 AND LYS-70</scope>
    <scope>UBIQUITINATION AT LYS-64 AND LYS-70</scope>
    <scope>MUTAGENESIS OF LYS-64 AND LYS-70</scope>
</reference>
<reference key="18">
    <citation type="journal article" date="2003" name="EMBO J.">
        <title>Arkadia amplifies TGF-beta superfamily signaling through degradation of Smad7.</title>
        <authorList>
            <person name="Koinuma D."/>
            <person name="Shinozaki M."/>
            <person name="Komuro A."/>
            <person name="Goto K."/>
            <person name="Saitoh M."/>
            <person name="Hanyu A."/>
            <person name="Ebina M."/>
            <person name="Nukiwa T."/>
            <person name="Miyazawa K."/>
            <person name="Imamura T."/>
            <person name="Miyazono K."/>
        </authorList>
    </citation>
    <scope>INTERACTION WITH RNF111</scope>
    <scope>UBIQUITINATION</scope>
    <scope>SUBCELLULAR LOCATION</scope>
</reference>
<reference key="19">
    <citation type="journal article" date="2004" name="J. Cell Biol.">
        <title>GADD34-PP1c recruited by Smad7 dephosphorylates TGFbeta type I receptor.</title>
        <authorList>
            <person name="Shi W."/>
            <person name="Sun C."/>
            <person name="He B."/>
            <person name="Xiong W."/>
            <person name="Shi X."/>
            <person name="Yao D."/>
            <person name="Cao X."/>
        </authorList>
    </citation>
    <scope>FUNCTION</scope>
    <scope>INTERACTION WITH PPP1R15A</scope>
</reference>
<reference key="20">
    <citation type="journal article" date="2004" name="Mol. Cell. Biol.">
        <title>Jab1/CSN5, a component of the COP9 signalosome, regulates transforming growth factor beta signaling by binding to Smad7 and promoting its degradation.</title>
        <authorList>
            <person name="Kim B.-C."/>
            <person name="Lee H.-J."/>
            <person name="Park S.H."/>
            <person name="Lee S.R."/>
            <person name="Karpova T.S."/>
            <person name="McNally J.G."/>
            <person name="Felici A."/>
            <person name="Lee D.K."/>
            <person name="Kim S.-J."/>
        </authorList>
    </citation>
    <scope>INTERACTION WITH COPS5</scope>
</reference>
<reference key="21">
    <citation type="journal article" date="2005" name="Mol. Cell">
        <title>Regulation of Smurf2 ubiquitin ligase activity by anchoring the E2 to the HECT domain.</title>
        <authorList>
            <person name="Ogunjimi A.A."/>
            <person name="Briant D.J."/>
            <person name="Pece-Barbara N."/>
            <person name="Le Roy C."/>
            <person name="Di Guglielmo G.M."/>
            <person name="Kavsak P."/>
            <person name="Rasmussen R.K."/>
            <person name="Seet B.T."/>
            <person name="Sicheri F."/>
            <person name="Wrana J.L."/>
        </authorList>
    </citation>
    <scope>INTERACTION WITH SMURF2</scope>
</reference>
<reference key="22">
    <citation type="journal article" date="2006" name="EMBO J.">
        <title>Axin is a scaffold protein in TGF-beta signaling that promotes degradation of Smad7 by Arkadia.</title>
        <authorList>
            <person name="Liu W."/>
            <person name="Rui H."/>
            <person name="Wang J."/>
            <person name="Lin S."/>
            <person name="He Y."/>
            <person name="Chen M."/>
            <person name="Li Q."/>
            <person name="Ye Z."/>
            <person name="Zhang S."/>
            <person name="Chan S.C."/>
            <person name="Chen Y.-G."/>
            <person name="Han J."/>
            <person name="Lin S.-C."/>
        </authorList>
    </citation>
    <scope>INTERACTION WITH AXIN1 AND AXIN2</scope>
    <scope>UBIQUITINATION</scope>
    <scope>SUBCELLULAR LOCATION</scope>
</reference>
<reference key="23">
    <citation type="journal article" date="2007" name="J. Biol. Chem.">
        <title>3-Phosphoinositide-dependent PDK1 negatively regulates transforming growth factor-beta-induced signaling in a kinase-dependent manner through physical interaction with Smad proteins.</title>
        <authorList>
            <person name="Seong H.A."/>
            <person name="Jung H."/>
            <person name="Kim K.T."/>
            <person name="Ha H."/>
        </authorList>
    </citation>
    <scope>FUNCTION</scope>
    <scope>SUBCELLULAR LOCATION</scope>
    <scope>PHOSPHORYLATION BY PDPK1</scope>
    <scope>INTERACTION WITH PDPK1</scope>
</reference>
<reference key="24">
    <citation type="journal article" date="2011" name="Mol. Cell. Biol.">
        <title>TSC-22 promotes transforming growth factor beta-mediated cardiac myofibroblast differentiation by antagonizing Smad7 activity.</title>
        <authorList>
            <person name="Yan X."/>
            <person name="Zhang J."/>
            <person name="Pan L."/>
            <person name="Wang P."/>
            <person name="Xue H."/>
            <person name="Zhang L."/>
            <person name="Gao X."/>
            <person name="Zhao X."/>
            <person name="Ning Y."/>
            <person name="Chen Y.G."/>
        </authorList>
    </citation>
    <scope>FUNCTION</scope>
    <scope>INTERACTION WITH TSC22D1 AND TGFBR1</scope>
</reference>
<reference key="25">
    <citation type="journal article" date="2006" name="J. Biol. Chem.">
        <title>An expanded WW domain recognition motif revealed by the interaction between Smad7 and the E3 ubiquitin ligase Smurf2.</title>
        <authorList>
            <person name="Chong P.A."/>
            <person name="Lin H."/>
            <person name="Wrana J.L."/>
            <person name="Forman-Kay J.D."/>
        </authorList>
    </citation>
    <scope>STRUCTURE BY NMR OF 203-217 IN COMPLEX WITH SMURF2</scope>
</reference>
<reference key="26">
    <citation type="journal article" date="2007" name="Nat. Genet.">
        <title>A genome-wide association study shows that common alleles of SMAD7 influence colorectal cancer risk.</title>
        <authorList>
            <consortium name="Members of the CORGI consortium"/>
            <person name="Broderick P."/>
            <person name="Carvajal-Carmona L."/>
            <person name="Pittman A.M."/>
            <person name="Webb E."/>
            <person name="Howarth K."/>
            <person name="Rowan A."/>
            <person name="Lubbe S."/>
            <person name="Spain S."/>
            <person name="Sullivan K."/>
            <person name="Fielding S."/>
            <person name="Jaeger E."/>
            <person name="Vijayakrishnan J."/>
            <person name="Kemp Z."/>
            <person name="Gorman M."/>
            <person name="Chandler I."/>
            <person name="Papaemmanuil E."/>
            <person name="Penegar S."/>
            <person name="Wood W."/>
            <person name="Sellick G."/>
            <person name="Qureshi M."/>
            <person name="Teixeira A."/>
            <person name="Domingo E."/>
            <person name="Barclay E."/>
            <person name="Martin L."/>
            <person name="Sieber O."/>
            <person name="Kerr D."/>
            <person name="Gray R."/>
            <person name="Peto J."/>
            <person name="Cazier J.-B."/>
            <person name="Tomlinson I."/>
            <person name="Houlston R.S."/>
        </authorList>
    </citation>
    <scope>INVOLVEMENT IN CRCS3</scope>
</reference>
<name>SMAD7_HUMAN</name>
<accession>O15105</accession>
<accession>B7Z773</accession>
<accession>K7EQ10</accession>
<accession>O14740</accession>
<accession>Q6DK23</accession>
<sequence>MFRTKRSALVRRLWRSRAPGGEDEEEGAGGGGGGGELRGEGATDSRAHGAGGGGPGRAGCCLGKAVRGAKGHHHPHPPAAGAGAAGGAEADLKALTHSVLKKLKERQLELLLQAVESRGGTRTACLLLPGRLDCRLGPGAPAGAQPAQPPSSYSLPLLLCKVFRWPDLRHSSEVKRLCCCESYGKINPELVCCNPHHLSRLCELESPPPPYSRYPMDFLKPTADCPDAVPSSAETGGTNYLAPGGLSDSQLLLEPGDRSHWCVVAYWEEKTRVGRLYCVQEPSLDIFYDLPQGNGFCLGQLNSDNKSQLVQKVRSKIGCGIQLTREVDGVWVYNRSSYPIFIKSATLDNPDSRTLLVHKVFPGFSIKAFDYEKAYSLQRPNDHEFMQQPWTGFTVQISFVKGWGQCYTRQFISSCPCWLEVIFNSR</sequence>
<protein>
    <recommendedName>
        <fullName>Mothers against decapentaplegic homolog 7</fullName>
        <shortName>MAD homolog 7</shortName>
        <shortName>Mothers against DPP homolog 7</shortName>
    </recommendedName>
    <alternativeName>
        <fullName>Mothers against decapentaplegic homolog 8</fullName>
        <shortName>MAD homolog 8</shortName>
        <shortName>Mothers against DPP homolog 8</shortName>
    </alternativeName>
    <alternativeName>
        <fullName>SMAD family member 7</fullName>
        <shortName>SMAD 7</shortName>
        <shortName>Smad7</shortName>
        <shortName>hSMAD7</shortName>
    </alternativeName>
</protein>
<organism>
    <name type="scientific">Homo sapiens</name>
    <name type="common">Human</name>
    <dbReference type="NCBI Taxonomy" id="9606"/>
    <lineage>
        <taxon>Eukaryota</taxon>
        <taxon>Metazoa</taxon>
        <taxon>Chordata</taxon>
        <taxon>Craniata</taxon>
        <taxon>Vertebrata</taxon>
        <taxon>Euteleostomi</taxon>
        <taxon>Mammalia</taxon>
        <taxon>Eutheria</taxon>
        <taxon>Euarchontoglires</taxon>
        <taxon>Primates</taxon>
        <taxon>Haplorrhini</taxon>
        <taxon>Catarrhini</taxon>
        <taxon>Hominidae</taxon>
        <taxon>Homo</taxon>
    </lineage>
</organism>
<dbReference type="EMBL" id="AF010193">
    <property type="protein sequence ID" value="AAB81246.1"/>
    <property type="molecule type" value="mRNA"/>
</dbReference>
<dbReference type="EMBL" id="AF015261">
    <property type="protein sequence ID" value="AAB81354.1"/>
    <property type="molecule type" value="mRNA"/>
</dbReference>
<dbReference type="EMBL" id="AF026559">
    <property type="protein sequence ID" value="AAL68977.1"/>
    <property type="molecule type" value="Genomic_DNA"/>
</dbReference>
<dbReference type="EMBL" id="AF026556">
    <property type="protein sequence ID" value="AAL68977.1"/>
    <property type="status" value="JOINED"/>
    <property type="molecule type" value="Genomic_DNA"/>
</dbReference>
<dbReference type="EMBL" id="AF026557">
    <property type="protein sequence ID" value="AAL68977.1"/>
    <property type="status" value="JOINED"/>
    <property type="molecule type" value="Genomic_DNA"/>
</dbReference>
<dbReference type="EMBL" id="AF026558">
    <property type="protein sequence ID" value="AAL68977.1"/>
    <property type="status" value="JOINED"/>
    <property type="molecule type" value="Genomic_DNA"/>
</dbReference>
<dbReference type="EMBL" id="AK301535">
    <property type="protein sequence ID" value="BAH13509.1"/>
    <property type="molecule type" value="mRNA"/>
</dbReference>
<dbReference type="EMBL" id="DA882147">
    <property type="status" value="NOT_ANNOTATED_CDS"/>
    <property type="molecule type" value="mRNA"/>
</dbReference>
<dbReference type="EMBL" id="AC114684">
    <property type="status" value="NOT_ANNOTATED_CDS"/>
    <property type="molecule type" value="Genomic_DNA"/>
</dbReference>
<dbReference type="EMBL" id="BC074818">
    <property type="protein sequence ID" value="AAH74818.2"/>
    <property type="molecule type" value="mRNA"/>
</dbReference>
<dbReference type="EMBL" id="BC074819">
    <property type="protein sequence ID" value="AAH74819.2"/>
    <property type="molecule type" value="mRNA"/>
</dbReference>
<dbReference type="CCDS" id="CCDS11936.1">
    <molecule id="O15105-1"/>
</dbReference>
<dbReference type="CCDS" id="CCDS54186.1">
    <molecule id="O15105-2"/>
</dbReference>
<dbReference type="CCDS" id="CCDS59317.1">
    <molecule id="O15105-3"/>
</dbReference>
<dbReference type="RefSeq" id="NP_001177750.1">
    <molecule id="O15105-3"/>
    <property type="nucleotide sequence ID" value="NM_001190821.2"/>
</dbReference>
<dbReference type="RefSeq" id="NP_001177751.1">
    <molecule id="O15105-2"/>
    <property type="nucleotide sequence ID" value="NM_001190822.2"/>
</dbReference>
<dbReference type="RefSeq" id="NP_001177752.1">
    <property type="nucleotide sequence ID" value="NM_001190823.1"/>
</dbReference>
<dbReference type="RefSeq" id="NP_005895.1">
    <molecule id="O15105-1"/>
    <property type="nucleotide sequence ID" value="NM_005904.4"/>
</dbReference>
<dbReference type="PDB" id="2DJY">
    <property type="method" value="NMR"/>
    <property type="chains" value="B=203-217"/>
</dbReference>
<dbReference type="PDB" id="2KXQ">
    <property type="method" value="NMR"/>
    <property type="chains" value="B=203-217"/>
</dbReference>
<dbReference type="PDB" id="2LTV">
    <property type="method" value="NMR"/>
    <property type="chains" value="B=206-217"/>
</dbReference>
<dbReference type="PDB" id="2LTW">
    <property type="method" value="NMR"/>
    <property type="chains" value="B=205-217"/>
</dbReference>
<dbReference type="PDB" id="2LTX">
    <property type="method" value="NMR"/>
    <property type="chains" value="B=203-217"/>
</dbReference>
<dbReference type="PDB" id="2LTY">
    <property type="method" value="NMR"/>
    <property type="chains" value="B=203-217"/>
</dbReference>
<dbReference type="PDB" id="2LTZ">
    <property type="method" value="NMR"/>
    <property type="chains" value="B=203-217"/>
</dbReference>
<dbReference type="PDBsum" id="2DJY"/>
<dbReference type="PDBsum" id="2KXQ"/>
<dbReference type="PDBsum" id="2LTV"/>
<dbReference type="PDBsum" id="2LTW"/>
<dbReference type="PDBsum" id="2LTX"/>
<dbReference type="PDBsum" id="2LTY"/>
<dbReference type="PDBsum" id="2LTZ"/>
<dbReference type="BMRB" id="O15105"/>
<dbReference type="SMR" id="O15105"/>
<dbReference type="BioGRID" id="110267">
    <property type="interactions" value="116"/>
</dbReference>
<dbReference type="CORUM" id="O15105"/>
<dbReference type="DIP" id="DIP-42252N"/>
<dbReference type="FunCoup" id="O15105">
    <property type="interactions" value="998"/>
</dbReference>
<dbReference type="IntAct" id="O15105">
    <property type="interactions" value="39"/>
</dbReference>
<dbReference type="MINT" id="O15105"/>
<dbReference type="STRING" id="9606.ENSP00000262158"/>
<dbReference type="iPTMnet" id="O15105"/>
<dbReference type="PhosphoSitePlus" id="O15105"/>
<dbReference type="BioMuta" id="SMAD7"/>
<dbReference type="MassIVE" id="O15105"/>
<dbReference type="PaxDb" id="9606-ENSP00000262158"/>
<dbReference type="PeptideAtlas" id="O15105"/>
<dbReference type="Antibodypedia" id="9268">
    <property type="antibodies" value="532 antibodies from 39 providers"/>
</dbReference>
<dbReference type="DNASU" id="4092"/>
<dbReference type="Ensembl" id="ENST00000262158.8">
    <molecule id="O15105-1"/>
    <property type="protein sequence ID" value="ENSP00000262158.2"/>
    <property type="gene ID" value="ENSG00000101665.10"/>
</dbReference>
<dbReference type="Ensembl" id="ENST00000589634.1">
    <molecule id="O15105-3"/>
    <property type="protein sequence ID" value="ENSP00000467621.1"/>
    <property type="gene ID" value="ENSG00000101665.10"/>
</dbReference>
<dbReference type="Ensembl" id="ENST00000591805.5">
    <molecule id="O15105-2"/>
    <property type="protein sequence ID" value="ENSP00000466902.1"/>
    <property type="gene ID" value="ENSG00000101665.10"/>
</dbReference>
<dbReference type="GeneID" id="4092"/>
<dbReference type="KEGG" id="hsa:4092"/>
<dbReference type="MANE-Select" id="ENST00000262158.8">
    <property type="protein sequence ID" value="ENSP00000262158.2"/>
    <property type="RefSeq nucleotide sequence ID" value="NM_005904.4"/>
    <property type="RefSeq protein sequence ID" value="NP_005895.1"/>
</dbReference>
<dbReference type="UCSC" id="uc002ldg.3">
    <molecule id="O15105-1"/>
    <property type="organism name" value="human"/>
</dbReference>
<dbReference type="AGR" id="HGNC:6773"/>
<dbReference type="CTD" id="4092"/>
<dbReference type="DisGeNET" id="4092"/>
<dbReference type="GeneCards" id="SMAD7"/>
<dbReference type="HGNC" id="HGNC:6773">
    <property type="gene designation" value="SMAD7"/>
</dbReference>
<dbReference type="HPA" id="ENSG00000101665">
    <property type="expression patterns" value="Low tissue specificity"/>
</dbReference>
<dbReference type="MalaCards" id="SMAD7"/>
<dbReference type="MIM" id="602932">
    <property type="type" value="gene"/>
</dbReference>
<dbReference type="MIM" id="612229">
    <property type="type" value="phenotype"/>
</dbReference>
<dbReference type="neXtProt" id="NX_O15105"/>
<dbReference type="OpenTargets" id="ENSG00000101665"/>
<dbReference type="PharmGKB" id="PA134875286"/>
<dbReference type="VEuPathDB" id="HostDB:ENSG00000101665"/>
<dbReference type="eggNOG" id="KOG3701">
    <property type="taxonomic scope" value="Eukaryota"/>
</dbReference>
<dbReference type="GeneTree" id="ENSGT00940000159872"/>
<dbReference type="HOGENOM" id="CLU_026736_5_0_1"/>
<dbReference type="InParanoid" id="O15105"/>
<dbReference type="OMA" id="CKIFRWP"/>
<dbReference type="OrthoDB" id="5946219at2759"/>
<dbReference type="PAN-GO" id="O15105">
    <property type="GO annotations" value="9 GO annotations based on evolutionary models"/>
</dbReference>
<dbReference type="PhylomeDB" id="O15105"/>
<dbReference type="TreeFam" id="TF314923"/>
<dbReference type="PathwayCommons" id="O15105"/>
<dbReference type="Reactome" id="R-HSA-201451">
    <property type="pathway name" value="Signaling by BMP"/>
</dbReference>
<dbReference type="Reactome" id="R-HSA-2173788">
    <property type="pathway name" value="Downregulation of TGF-beta receptor signaling"/>
</dbReference>
<dbReference type="Reactome" id="R-HSA-2173795">
    <property type="pathway name" value="Downregulation of SMAD2/3:SMAD4 transcriptional activity"/>
</dbReference>
<dbReference type="Reactome" id="R-HSA-2173796">
    <property type="pathway name" value="SMAD2/SMAD3:SMAD4 heterotrimer regulates transcription"/>
</dbReference>
<dbReference type="Reactome" id="R-HSA-5689603">
    <property type="pathway name" value="UCH proteinases"/>
</dbReference>
<dbReference type="Reactome" id="R-HSA-5689880">
    <property type="pathway name" value="Ub-specific processing proteases"/>
</dbReference>
<dbReference type="Reactome" id="R-HSA-877300">
    <property type="pathway name" value="Interferon gamma signaling"/>
</dbReference>
<dbReference type="SignaLink" id="O15105"/>
<dbReference type="SIGNOR" id="O15105"/>
<dbReference type="BioGRID-ORCS" id="4092">
    <property type="hits" value="27 hits in 1182 CRISPR screens"/>
</dbReference>
<dbReference type="ChiTaRS" id="SMAD7">
    <property type="organism name" value="human"/>
</dbReference>
<dbReference type="EvolutionaryTrace" id="O15105"/>
<dbReference type="GeneWiki" id="Mothers_against_decapentaplegic_homolog_7"/>
<dbReference type="GenomeRNAi" id="4092"/>
<dbReference type="Pharos" id="O15105">
    <property type="development level" value="Tbio"/>
</dbReference>
<dbReference type="PRO" id="PR:O15105"/>
<dbReference type="Proteomes" id="UP000005640">
    <property type="component" value="Chromosome 18"/>
</dbReference>
<dbReference type="RNAct" id="O15105">
    <property type="molecule type" value="protein"/>
</dbReference>
<dbReference type="Bgee" id="ENSG00000101665">
    <property type="expression patterns" value="Expressed in popliteal artery and 175 other cell types or tissues"/>
</dbReference>
<dbReference type="ExpressionAtlas" id="O15105">
    <property type="expression patterns" value="baseline and differential"/>
</dbReference>
<dbReference type="GO" id="GO:0005813">
    <property type="term" value="C:centrosome"/>
    <property type="evidence" value="ECO:0000314"/>
    <property type="project" value="HPA"/>
</dbReference>
<dbReference type="GO" id="GO:0000785">
    <property type="term" value="C:chromatin"/>
    <property type="evidence" value="ECO:0000247"/>
    <property type="project" value="NTNU_SB"/>
</dbReference>
<dbReference type="GO" id="GO:0036064">
    <property type="term" value="C:ciliary basal body"/>
    <property type="evidence" value="ECO:0000314"/>
    <property type="project" value="HPA"/>
</dbReference>
<dbReference type="GO" id="GO:0005737">
    <property type="term" value="C:cytoplasm"/>
    <property type="evidence" value="ECO:0000314"/>
    <property type="project" value="BHF-UCL"/>
</dbReference>
<dbReference type="GO" id="GO:0005829">
    <property type="term" value="C:cytosol"/>
    <property type="evidence" value="ECO:0000314"/>
    <property type="project" value="HPA"/>
</dbReference>
<dbReference type="GO" id="GO:0001650">
    <property type="term" value="C:fibrillar center"/>
    <property type="evidence" value="ECO:0000314"/>
    <property type="project" value="HPA"/>
</dbReference>
<dbReference type="GO" id="GO:0071144">
    <property type="term" value="C:heteromeric SMAD protein complex"/>
    <property type="evidence" value="ECO:0000318"/>
    <property type="project" value="GO_Central"/>
</dbReference>
<dbReference type="GO" id="GO:0005654">
    <property type="term" value="C:nucleoplasm"/>
    <property type="evidence" value="ECO:0000314"/>
    <property type="project" value="HPA"/>
</dbReference>
<dbReference type="GO" id="GO:0005634">
    <property type="term" value="C:nucleus"/>
    <property type="evidence" value="ECO:0000314"/>
    <property type="project" value="BHF-UCL"/>
</dbReference>
<dbReference type="GO" id="GO:0005886">
    <property type="term" value="C:plasma membrane"/>
    <property type="evidence" value="ECO:0000314"/>
    <property type="project" value="BHF-UCL"/>
</dbReference>
<dbReference type="GO" id="GO:0032991">
    <property type="term" value="C:protein-containing complex"/>
    <property type="evidence" value="ECO:0000314"/>
    <property type="project" value="MGI"/>
</dbReference>
<dbReference type="GO" id="GO:0070697">
    <property type="term" value="F:activin receptor binding"/>
    <property type="evidence" value="ECO:0000353"/>
    <property type="project" value="BHF-UCL"/>
</dbReference>
<dbReference type="GO" id="GO:0008013">
    <property type="term" value="F:beta-catenin binding"/>
    <property type="evidence" value="ECO:0000353"/>
    <property type="project" value="BHF-UCL"/>
</dbReference>
<dbReference type="GO" id="GO:0005518">
    <property type="term" value="F:collagen binding"/>
    <property type="evidence" value="ECO:0007669"/>
    <property type="project" value="Ensembl"/>
</dbReference>
<dbReference type="GO" id="GO:0070411">
    <property type="term" value="F:I-SMAD binding"/>
    <property type="evidence" value="ECO:0000353"/>
    <property type="project" value="BHF-UCL"/>
</dbReference>
<dbReference type="GO" id="GO:0046872">
    <property type="term" value="F:metal ion binding"/>
    <property type="evidence" value="ECO:0007669"/>
    <property type="project" value="UniProtKB-KW"/>
</dbReference>
<dbReference type="GO" id="GO:0003714">
    <property type="term" value="F:transcription corepressor activity"/>
    <property type="evidence" value="ECO:0000314"/>
    <property type="project" value="BHF-UCL"/>
</dbReference>
<dbReference type="GO" id="GO:0140416">
    <property type="term" value="F:transcription regulator inhibitor activity"/>
    <property type="evidence" value="ECO:0000314"/>
    <property type="project" value="BHF-UCL"/>
</dbReference>
<dbReference type="GO" id="GO:0034713">
    <property type="term" value="F:type I transforming growth factor beta receptor binding"/>
    <property type="evidence" value="ECO:0000353"/>
    <property type="project" value="BHF-UCL"/>
</dbReference>
<dbReference type="GO" id="GO:0031625">
    <property type="term" value="F:ubiquitin protein ligase binding"/>
    <property type="evidence" value="ECO:0000353"/>
    <property type="project" value="BHF-UCL"/>
</dbReference>
<dbReference type="GO" id="GO:1990756">
    <property type="term" value="F:ubiquitin-like ligase-substrate adaptor activity"/>
    <property type="evidence" value="ECO:0000314"/>
    <property type="project" value="BHF-UCL"/>
</dbReference>
<dbReference type="GO" id="GO:0034333">
    <property type="term" value="P:adherens junction assembly"/>
    <property type="evidence" value="ECO:0000315"/>
    <property type="project" value="BHF-UCL"/>
</dbReference>
<dbReference type="GO" id="GO:0009653">
    <property type="term" value="P:anatomical structure morphogenesis"/>
    <property type="evidence" value="ECO:0000318"/>
    <property type="project" value="GO_Central"/>
</dbReference>
<dbReference type="GO" id="GO:0048844">
    <property type="term" value="P:artery morphogenesis"/>
    <property type="evidence" value="ECO:0000250"/>
    <property type="project" value="BHF-UCL"/>
</dbReference>
<dbReference type="GO" id="GO:1904886">
    <property type="term" value="P:beta-catenin destruction complex disassembly"/>
    <property type="evidence" value="ECO:0000314"/>
    <property type="project" value="BHF-UCL"/>
</dbReference>
<dbReference type="GO" id="GO:0030154">
    <property type="term" value="P:cell differentiation"/>
    <property type="evidence" value="ECO:0000318"/>
    <property type="project" value="GO_Central"/>
</dbReference>
<dbReference type="GO" id="GO:1990830">
    <property type="term" value="P:cellular response to leukemia inhibitory factor"/>
    <property type="evidence" value="ECO:0007669"/>
    <property type="project" value="Ensembl"/>
</dbReference>
<dbReference type="GO" id="GO:0032926">
    <property type="term" value="P:negative regulation of activin receptor signaling pathway"/>
    <property type="evidence" value="ECO:0000314"/>
    <property type="project" value="BHF-UCL"/>
</dbReference>
<dbReference type="GO" id="GO:0030514">
    <property type="term" value="P:negative regulation of BMP signaling pathway"/>
    <property type="evidence" value="ECO:0000314"/>
    <property type="project" value="BHF-UCL"/>
</dbReference>
<dbReference type="GO" id="GO:0030336">
    <property type="term" value="P:negative regulation of cell migration"/>
    <property type="evidence" value="ECO:0000304"/>
    <property type="project" value="BHF-UCL"/>
</dbReference>
<dbReference type="GO" id="GO:1902731">
    <property type="term" value="P:negative regulation of chondrocyte proliferation"/>
    <property type="evidence" value="ECO:0007669"/>
    <property type="project" value="Ensembl"/>
</dbReference>
<dbReference type="GO" id="GO:0010719">
    <property type="term" value="P:negative regulation of epithelial to mesenchymal transition"/>
    <property type="evidence" value="ECO:0000304"/>
    <property type="project" value="BHF-UCL"/>
</dbReference>
<dbReference type="GO" id="GO:0030279">
    <property type="term" value="P:negative regulation of ossification"/>
    <property type="evidence" value="ECO:0007669"/>
    <property type="project" value="Ensembl"/>
</dbReference>
<dbReference type="GO" id="GO:0060392">
    <property type="term" value="P:negative regulation of SMAD protein signal transduction"/>
    <property type="evidence" value="ECO:0000314"/>
    <property type="project" value="BHF-UCL"/>
</dbReference>
<dbReference type="GO" id="GO:0002725">
    <property type="term" value="P:negative regulation of T cell cytokine production"/>
    <property type="evidence" value="ECO:0000250"/>
    <property type="project" value="BHF-UCL"/>
</dbReference>
<dbReference type="GO" id="GO:2000320">
    <property type="term" value="P:negative regulation of T-helper 17 cell differentiation"/>
    <property type="evidence" value="ECO:0000250"/>
    <property type="project" value="BHF-UCL"/>
</dbReference>
<dbReference type="GO" id="GO:2000317">
    <property type="term" value="P:negative regulation of T-helper 17 type immune response"/>
    <property type="evidence" value="ECO:0000250"/>
    <property type="project" value="BHF-UCL"/>
</dbReference>
<dbReference type="GO" id="GO:0010944">
    <property type="term" value="P:negative regulation of transcription by competitive promoter binding"/>
    <property type="evidence" value="ECO:0000314"/>
    <property type="project" value="BHF-UCL"/>
</dbReference>
<dbReference type="GO" id="GO:0000122">
    <property type="term" value="P:negative regulation of transcription by RNA polymerase II"/>
    <property type="evidence" value="ECO:0000314"/>
    <property type="project" value="BHF-UCL"/>
</dbReference>
<dbReference type="GO" id="GO:0030512">
    <property type="term" value="P:negative regulation of transforming growth factor beta receptor signaling pathway"/>
    <property type="evidence" value="ECO:0000314"/>
    <property type="project" value="BHF-UCL"/>
</dbReference>
<dbReference type="GO" id="GO:2000049">
    <property type="term" value="P:positive regulation of cell-cell adhesion mediated by cadherin"/>
    <property type="evidence" value="ECO:0000314"/>
    <property type="project" value="BHF-UCL"/>
</dbReference>
<dbReference type="GO" id="GO:1903043">
    <property type="term" value="P:positive regulation of chondrocyte hypertrophy"/>
    <property type="evidence" value="ECO:0007669"/>
    <property type="project" value="Ensembl"/>
</dbReference>
<dbReference type="GO" id="GO:0032436">
    <property type="term" value="P:positive regulation of proteasomal ubiquitin-dependent protein catabolic process"/>
    <property type="evidence" value="ECO:0000304"/>
    <property type="project" value="BHF-UCL"/>
</dbReference>
<dbReference type="GO" id="GO:0050821">
    <property type="term" value="P:protein stabilization"/>
    <property type="evidence" value="ECO:0000314"/>
    <property type="project" value="BHF-UCL"/>
</dbReference>
<dbReference type="GO" id="GO:0032984">
    <property type="term" value="P:protein-containing complex disassembly"/>
    <property type="evidence" value="ECO:0000314"/>
    <property type="project" value="BHF-UCL"/>
</dbReference>
<dbReference type="GO" id="GO:0031503">
    <property type="term" value="P:protein-containing complex localization"/>
    <property type="evidence" value="ECO:0000314"/>
    <property type="project" value="BHF-UCL"/>
</dbReference>
<dbReference type="GO" id="GO:0055117">
    <property type="term" value="P:regulation of cardiac muscle contraction"/>
    <property type="evidence" value="ECO:0000250"/>
    <property type="project" value="BHF-UCL"/>
</dbReference>
<dbReference type="GO" id="GO:0010717">
    <property type="term" value="P:regulation of epithelial to mesenchymal transition"/>
    <property type="evidence" value="ECO:0000315"/>
    <property type="project" value="BHF-UCL"/>
</dbReference>
<dbReference type="GO" id="GO:0006357">
    <property type="term" value="P:regulation of transcription by RNA polymerase II"/>
    <property type="evidence" value="ECO:0000318"/>
    <property type="project" value="GO_Central"/>
</dbReference>
<dbReference type="GO" id="GO:0060373">
    <property type="term" value="P:regulation of ventricular cardiac muscle cell membrane depolarization"/>
    <property type="evidence" value="ECO:0000250"/>
    <property type="project" value="ARUK-UCL"/>
</dbReference>
<dbReference type="GO" id="GO:0034616">
    <property type="term" value="P:response to laminar fluid shear stress"/>
    <property type="evidence" value="ECO:0000270"/>
    <property type="project" value="BHF-UCL"/>
</dbReference>
<dbReference type="GO" id="GO:0060395">
    <property type="term" value="P:SMAD protein signal transduction"/>
    <property type="evidence" value="ECO:0000314"/>
    <property type="project" value="BHF-UCL"/>
</dbReference>
<dbReference type="GO" id="GO:0007179">
    <property type="term" value="P:transforming growth factor beta receptor signaling pathway"/>
    <property type="evidence" value="ECO:0000314"/>
    <property type="project" value="BHF-UCL"/>
</dbReference>
<dbReference type="GO" id="GO:0001657">
    <property type="term" value="P:ureteric bud development"/>
    <property type="evidence" value="ECO:0007669"/>
    <property type="project" value="Ensembl"/>
</dbReference>
<dbReference type="GO" id="GO:0055010">
    <property type="term" value="P:ventricular cardiac muscle tissue morphogenesis"/>
    <property type="evidence" value="ECO:0000250"/>
    <property type="project" value="BHF-UCL"/>
</dbReference>
<dbReference type="GO" id="GO:0060412">
    <property type="term" value="P:ventricular septum morphogenesis"/>
    <property type="evidence" value="ECO:0000250"/>
    <property type="project" value="BHF-UCL"/>
</dbReference>
<dbReference type="CDD" id="cd10494">
    <property type="entry name" value="MH1_SMAD_7"/>
    <property type="match status" value="1"/>
</dbReference>
<dbReference type="CDD" id="cd10500">
    <property type="entry name" value="MH2_SMAD_7"/>
    <property type="match status" value="1"/>
</dbReference>
<dbReference type="FunFam" id="2.60.200.10:FF:000004">
    <property type="entry name" value="Mothers against decapentaplegic homolog"/>
    <property type="match status" value="1"/>
</dbReference>
<dbReference type="FunFam" id="3.90.520.10:FF:000003">
    <property type="entry name" value="Mothers against decapentaplegic homolog"/>
    <property type="match status" value="1"/>
</dbReference>
<dbReference type="Gene3D" id="2.60.200.10">
    <property type="match status" value="1"/>
</dbReference>
<dbReference type="Gene3D" id="3.90.520.10">
    <property type="entry name" value="SMAD MH1 domain"/>
    <property type="match status" value="1"/>
</dbReference>
<dbReference type="IDEAL" id="IID00135"/>
<dbReference type="InterPro" id="IPR013790">
    <property type="entry name" value="Dwarfin"/>
</dbReference>
<dbReference type="InterPro" id="IPR003619">
    <property type="entry name" value="MAD_homology1_Dwarfin-type"/>
</dbReference>
<dbReference type="InterPro" id="IPR013019">
    <property type="entry name" value="MAD_homology_MH1"/>
</dbReference>
<dbReference type="InterPro" id="IPR017855">
    <property type="entry name" value="SMAD-like_dom_sf"/>
</dbReference>
<dbReference type="InterPro" id="IPR001132">
    <property type="entry name" value="SMAD_dom_Dwarfin-type"/>
</dbReference>
<dbReference type="InterPro" id="IPR008984">
    <property type="entry name" value="SMAD_FHA_dom_sf"/>
</dbReference>
<dbReference type="InterPro" id="IPR036578">
    <property type="entry name" value="SMAD_MH1_sf"/>
</dbReference>
<dbReference type="PANTHER" id="PTHR13703:SF44">
    <property type="entry name" value="MOTHERS AGAINST DECAPENTAPLEGIC HOMOLOG 7"/>
    <property type="match status" value="1"/>
</dbReference>
<dbReference type="PANTHER" id="PTHR13703">
    <property type="entry name" value="SMAD"/>
    <property type="match status" value="1"/>
</dbReference>
<dbReference type="Pfam" id="PF03165">
    <property type="entry name" value="MH1"/>
    <property type="match status" value="1"/>
</dbReference>
<dbReference type="Pfam" id="PF03166">
    <property type="entry name" value="MH2"/>
    <property type="match status" value="1"/>
</dbReference>
<dbReference type="SMART" id="SM00523">
    <property type="entry name" value="DWA"/>
    <property type="match status" value="1"/>
</dbReference>
<dbReference type="SMART" id="SM00524">
    <property type="entry name" value="DWB"/>
    <property type="match status" value="1"/>
</dbReference>
<dbReference type="SUPFAM" id="SSF56366">
    <property type="entry name" value="SMAD MH1 domain"/>
    <property type="match status" value="1"/>
</dbReference>
<dbReference type="SUPFAM" id="SSF49879">
    <property type="entry name" value="SMAD/FHA domain"/>
    <property type="match status" value="1"/>
</dbReference>
<dbReference type="PROSITE" id="PS51075">
    <property type="entry name" value="MH1"/>
    <property type="match status" value="1"/>
</dbReference>
<dbReference type="PROSITE" id="PS51076">
    <property type="entry name" value="MH2"/>
    <property type="match status" value="1"/>
</dbReference>
<gene>
    <name type="primary">SMAD7</name>
    <name type="synonym">MADH7</name>
    <name type="synonym">MADH8</name>
</gene>
<comment type="function">
    <text evidence="6 9 12 17 19 21">Antagonist of signaling by TGF-beta (transforming growth factor) type 1 receptor superfamily members; has been shown to inhibit TGF-beta (Transforming growth factor) and activin signaling by associating with their receptors thus preventing SMAD2 access (PubMed:21791611). Functions as an adapter to recruit SMURF2 to the TGF-beta receptor complex. Also acts by recruiting the PPP1R15A-PP1 complex to TGFBR1, which promotes its dephosphorylation. Positively regulates PDPK1 kinase activity by stimulating its dissociation from the 14-3-3 protein YWHAQ which acts as a negative regulator.</text>
</comment>
<comment type="subunit">
    <text evidence="1 6 7 8 9 10 11 12 13 14 15 16 17 19 21">Interacts with WWP1 (By similarity). Interacts with COPS5. Interacts with NEDD4L. Interacts with STAMBP. Interacts with RNF111, AXIN1 and AXIN2. Interacts with PPP1R15A. Interacts (via MH2 domain) with EP300. Interacts with ACVR1B, SMURF1, SMURF2 and TGFBR1; SMAD7 recruits SMURF1 and SMURF2 to the TGF-beta receptor and regulates its degradation (PubMed:11163210, PubMed:11278251, PubMed:12023024, PubMed:21791611, PubMed:9892009). Interacts with PDPK1 (via PH domain). Interacts with TSC22D1/TSC-22; the interaction requires TGF-beta and the interaction is inhibited by TGFBR1 (PubMed:21791611).</text>
</comment>
<comment type="interaction">
    <interactant intactId="EBI-3861591">
        <id>O15105</id>
    </interactant>
    <interactant intactId="EBI-1384128">
        <id>P36896</id>
        <label>ACVR1B</label>
    </interactant>
    <organismsDiffer>false</organismsDiffer>
    <experiments>2</experiments>
</comment>
<comment type="interaction">
    <interactant intactId="EBI-3861591">
        <id>O15105</id>
    </interactant>
    <interactant intactId="EBI-710484">
        <id>O15169</id>
        <label>AXIN1</label>
    </interactant>
    <organismsDiffer>false</organismsDiffer>
    <experiments>8</experiments>
</comment>
<comment type="interaction">
    <interactant intactId="EBI-3861591">
        <id>O15105</id>
    </interactant>
    <interactant intactId="EBI-594661">
        <id>Q92905</id>
        <label>COPS5</label>
    </interactant>
    <organismsDiffer>false</organismsDiffer>
    <experiments>10</experiments>
</comment>
<comment type="interaction">
    <interactant intactId="EBI-3861591">
        <id>O15105</id>
    </interactant>
    <interactant intactId="EBI-1027571">
        <id>P62942</id>
        <label>FKBP1A</label>
    </interactant>
    <organismsDiffer>false</organismsDiffer>
    <experiments>3</experiments>
</comment>
<comment type="interaction">
    <interactant intactId="EBI-3861591">
        <id>O15105</id>
    </interactant>
    <interactant intactId="EBI-7196393">
        <id>Q96PU5-5</id>
        <label>NEDD4L</label>
    </interactant>
    <organismsDiffer>false</organismsDiffer>
    <experiments>3</experiments>
</comment>
<comment type="interaction">
    <interactant intactId="EBI-3861591">
        <id>O15105</id>
    </interactant>
    <interactant intactId="EBI-15884081">
        <id>Q9HCE7-1</id>
        <label>SMURF1</label>
    </interactant>
    <organismsDiffer>false</organismsDiffer>
    <experiments>4</experiments>
</comment>
<comment type="interaction">
    <interactant intactId="EBI-3861591">
        <id>O15105</id>
    </interactant>
    <interactant intactId="EBI-396727">
        <id>Q9HAU4</id>
        <label>SMURF2</label>
    </interactant>
    <organismsDiffer>false</organismsDiffer>
    <experiments>7</experiments>
</comment>
<comment type="interaction">
    <interactant intactId="EBI-3861591">
        <id>O15105</id>
    </interactant>
    <interactant intactId="EBI-743923">
        <id>O00308</id>
        <label>WWP2</label>
    </interactant>
    <organismsDiffer>false</organismsDiffer>
    <experiments>5</experiments>
</comment>
<comment type="interaction">
    <interactant intactId="EBI-3861591">
        <id>O15105</id>
    </interactant>
    <interactant intactId="EBI-1044059">
        <id>P46937</id>
        <label>YAP1</label>
    </interactant>
    <organismsDiffer>false</organismsDiffer>
    <experiments>7</experiments>
</comment>
<comment type="interaction">
    <interactant intactId="EBI-3861591">
        <id>O15105</id>
    </interactant>
    <interactant intactId="EBI-646015">
        <id>Q99ML9</id>
        <label>Rnf111</label>
    </interactant>
    <organismsDiffer>true</organismsDiffer>
    <experiments>2</experiments>
</comment>
<comment type="subcellular location">
    <subcellularLocation>
        <location evidence="11 15 17">Nucleus</location>
    </subcellularLocation>
    <subcellularLocation>
        <location evidence="11 15 17">Cytoplasm</location>
    </subcellularLocation>
    <text evidence="15 17">Interaction with NEDD4L or RNF111 induces translocation from the nucleus to the cytoplasm (PubMed:16601693). TGF-beta stimulates its translocation from the nucleus to the cytoplasm. PDPK1 inhibits its translocation from the nucleus to the cytoplasm in response to TGF-beta (PubMed:17327236).</text>
</comment>
<comment type="alternative products">
    <event type="alternative splicing"/>
    <isoform>
        <id>O15105-1</id>
        <name>1</name>
        <sequence type="displayed"/>
    </isoform>
    <isoform>
        <id>O15105-2</id>
        <name>2</name>
        <sequence type="described" ref="VSP_045197"/>
    </isoform>
    <isoform>
        <id>O15105-3</id>
        <name>3</name>
        <sequence type="described" ref="VSP_047540"/>
    </isoform>
</comment>
<comment type="tissue specificity">
    <text>Ubiquitous with higher expression in the lung and vascular endothelium.</text>
</comment>
<comment type="induction">
    <text>By TGFB1.</text>
</comment>
<comment type="PTM">
    <text evidence="2 17">Phosphorylation on Ser-249 does not affect its stability, nuclear localization or inhibitory function in TGFB signaling; however it affects its ability to regulate transcription (By similarity). Phosphorylated by PDPK1.</text>
</comment>
<comment type="PTM">
    <text evidence="2 7 11 15">Ubiquitinated by WWP1 (By similarity). Polyubiquitinated by RNF111, which is enhanced by AXIN1 and promotes proteasomal degradation (PubMed:14657019, PubMed:16601693). In response to TGF-beta, ubiquitinated by SMURF1; which promotes its degradation (PubMed:11278251).</text>
</comment>
<comment type="PTM">
    <text evidence="10">Acetylation prevents ubiquitination and degradation mediated by SMURF1.</text>
</comment>
<comment type="disease" evidence="18">
    <disease id="DI-02891">
        <name>Colorectal cancer 3</name>
        <acronym>CRCS3</acronym>
        <description>A complex disease characterized by malignant lesions arising from the inner wall of the large intestine (the colon) and the rectum. Genetic alterations are often associated with progression from premalignant lesion (adenoma) to invasive adenocarcinoma. Risk factors for cancer of the colon and rectum include colon polyps, long-standing ulcerative colitis, and genetic family history.</description>
        <dbReference type="MIM" id="612229"/>
    </disease>
    <text>Disease susceptibility is associated with variants affecting the gene represented in this entry.</text>
</comment>
<comment type="similarity">
    <text evidence="23">Belongs to the dwarfin/SMAD family.</text>
</comment>
<keyword id="KW-0002">3D-structure</keyword>
<keyword id="KW-0007">Acetylation</keyword>
<keyword id="KW-0025">Alternative splicing</keyword>
<keyword id="KW-0963">Cytoplasm</keyword>
<keyword id="KW-1017">Isopeptide bond</keyword>
<keyword id="KW-0479">Metal-binding</keyword>
<keyword id="KW-0539">Nucleus</keyword>
<keyword id="KW-0597">Phosphoprotein</keyword>
<keyword id="KW-1267">Proteomics identification</keyword>
<keyword id="KW-1185">Reference proteome</keyword>
<keyword id="KW-0804">Transcription</keyword>
<keyword id="KW-0805">Transcription regulation</keyword>
<keyword id="KW-0832">Ubl conjugation</keyword>
<keyword id="KW-0862">Zinc</keyword>
<feature type="chain" id="PRO_0000090872" description="Mothers against decapentaplegic homolog 7">
    <location>
        <begin position="1"/>
        <end position="426"/>
    </location>
</feature>
<feature type="domain" description="MH1" evidence="3">
    <location>
        <begin position="64"/>
        <end position="207"/>
    </location>
</feature>
<feature type="domain" description="MH2" evidence="4">
    <location>
        <begin position="261"/>
        <end position="426"/>
    </location>
</feature>
<feature type="region of interest" description="Disordered" evidence="5">
    <location>
        <begin position="13"/>
        <end position="55"/>
    </location>
</feature>
<feature type="region of interest" description="Important for interaction with SMURF2">
    <location>
        <begin position="208"/>
        <end position="217"/>
    </location>
</feature>
<feature type="short sequence motif" description="PY-motif">
    <location>
        <begin position="208"/>
        <end position="211"/>
    </location>
</feature>
<feature type="compositionally biased region" description="Basic and acidic residues" evidence="5">
    <location>
        <begin position="37"/>
        <end position="47"/>
    </location>
</feature>
<feature type="binding site" evidence="1">
    <location>
        <position position="125"/>
    </location>
    <ligand>
        <name>Zn(2+)</name>
        <dbReference type="ChEBI" id="CHEBI:29105"/>
    </ligand>
</feature>
<feature type="binding site" evidence="1">
    <location>
        <position position="180"/>
    </location>
    <ligand>
        <name>Zn(2+)</name>
        <dbReference type="ChEBI" id="CHEBI:29105"/>
    </ligand>
</feature>
<feature type="binding site" evidence="1">
    <location>
        <position position="192"/>
    </location>
    <ligand>
        <name>Zn(2+)</name>
        <dbReference type="ChEBI" id="CHEBI:29105"/>
    </ligand>
</feature>
<feature type="binding site" evidence="1">
    <location>
        <position position="197"/>
    </location>
    <ligand>
        <name>Zn(2+)</name>
        <dbReference type="ChEBI" id="CHEBI:29105"/>
    </ligand>
</feature>
<feature type="modified residue" description="N6-acetyllysine; alternate" evidence="10">
    <location>
        <position position="64"/>
    </location>
</feature>
<feature type="modified residue" description="N6-acetyllysine; alternate" evidence="10">
    <location>
        <position position="70"/>
    </location>
</feature>
<feature type="modified residue" description="Phosphoserine" evidence="2 4">
    <location>
        <position position="249"/>
    </location>
</feature>
<feature type="cross-link" description="Glycyl lysine isopeptide (Lys-Gly) (interchain with G-Cter in ubiquitin); alternate" evidence="10">
    <location>
        <position position="64"/>
    </location>
</feature>
<feature type="cross-link" description="Glycyl lysine isopeptide (Lys-Gly) (interchain with G-Cter in ubiquitin); alternate" evidence="10">
    <location>
        <position position="70"/>
    </location>
</feature>
<feature type="splice variant" id="VSP_045197" description="In isoform 2." evidence="22">
    <location>
        <begin position="1"/>
        <end position="215"/>
    </location>
</feature>
<feature type="splice variant" id="VSP_047540" description="In isoform 3." evidence="22">
    <location>
        <position position="223"/>
    </location>
</feature>
<feature type="mutagenesis site" description="Loss of acetylation, and of SMURF1-dependent degradation; when associated with A-70." evidence="10">
    <original>K</original>
    <variation>A</variation>
    <location>
        <position position="64"/>
    </location>
</feature>
<feature type="mutagenesis site" description="Loss of acetylation, and of SMURF1-dependent degradation; when associated with A-64." evidence="10">
    <original>K</original>
    <variation>A</variation>
    <location>
        <position position="70"/>
    </location>
</feature>
<feature type="mutagenesis site" description="Diminishes interaction with SMURF2." evidence="6">
    <location>
        <begin position="207"/>
        <end position="211"/>
    </location>
</feature>
<feature type="mutagenesis site" description="Diminishes interaction with SMURF2 and reduces inhibition of TGF-beta signaling." evidence="6">
    <original>Y</original>
    <variation>A</variation>
    <location>
        <position position="211"/>
    </location>
</feature>
<feature type="mutagenesis site" description="90% reduction in TGF-beta receptor binding." evidence="20">
    <location>
        <begin position="409"/>
        <end position="426"/>
    </location>
</feature>
<feature type="sequence conflict" description="In Ref. 3; AAB81354." evidence="23" ref="3">
    <original>G</original>
    <variation>C</variation>
    <location>
        <position position="71"/>
    </location>
</feature>
<feature type="strand" evidence="24">
    <location>
        <begin position="204"/>
        <end position="206"/>
    </location>
</feature>
<feature type="strand" evidence="24">
    <location>
        <begin position="212"/>
        <end position="214"/>
    </location>
</feature>
<evidence type="ECO:0000250" key="1"/>
<evidence type="ECO:0000250" key="2">
    <source>
        <dbReference type="UniProtKB" id="O35253"/>
    </source>
</evidence>
<evidence type="ECO:0000255" key="3">
    <source>
        <dbReference type="PROSITE-ProRule" id="PRU00438"/>
    </source>
</evidence>
<evidence type="ECO:0000255" key="4">
    <source>
        <dbReference type="PROSITE-ProRule" id="PRU00439"/>
    </source>
</evidence>
<evidence type="ECO:0000256" key="5">
    <source>
        <dbReference type="SAM" id="MobiDB-lite"/>
    </source>
</evidence>
<evidence type="ECO:0000269" key="6">
    <source>
    </source>
</evidence>
<evidence type="ECO:0000269" key="7">
    <source>
    </source>
</evidence>
<evidence type="ECO:0000269" key="8">
    <source>
    </source>
</evidence>
<evidence type="ECO:0000269" key="9">
    <source>
    </source>
</evidence>
<evidence type="ECO:0000269" key="10">
    <source>
    </source>
</evidence>
<evidence type="ECO:0000269" key="11">
    <source>
    </source>
</evidence>
<evidence type="ECO:0000269" key="12">
    <source>
    </source>
</evidence>
<evidence type="ECO:0000269" key="13">
    <source>
    </source>
</evidence>
<evidence type="ECO:0000269" key="14">
    <source>
    </source>
</evidence>
<evidence type="ECO:0000269" key="15">
    <source>
    </source>
</evidence>
<evidence type="ECO:0000269" key="16">
    <source>
    </source>
</evidence>
<evidence type="ECO:0000269" key="17">
    <source>
    </source>
</evidence>
<evidence type="ECO:0000269" key="18">
    <source>
    </source>
</evidence>
<evidence type="ECO:0000269" key="19">
    <source>
    </source>
</evidence>
<evidence type="ECO:0000269" key="20">
    <source>
    </source>
</evidence>
<evidence type="ECO:0000269" key="21">
    <source>
    </source>
</evidence>
<evidence type="ECO:0000303" key="22">
    <source>
    </source>
</evidence>
<evidence type="ECO:0000305" key="23"/>
<evidence type="ECO:0007829" key="24">
    <source>
        <dbReference type="PDB" id="2DJY"/>
    </source>
</evidence>
<proteinExistence type="evidence at protein level"/>